<feature type="chain" id="PRO_0000325516" description="3-dehydroquinate dehydratase">
    <location>
        <begin position="1"/>
        <end position="255"/>
    </location>
</feature>
<feature type="active site" description="Proton donor/acceptor" evidence="1">
    <location>
        <position position="144"/>
    </location>
</feature>
<feature type="active site" description="Schiff-base intermediate with substrate" evidence="1">
    <location>
        <position position="171"/>
    </location>
</feature>
<feature type="binding site" evidence="1">
    <location>
        <begin position="47"/>
        <end position="49"/>
    </location>
    <ligand>
        <name>3-dehydroquinate</name>
        <dbReference type="ChEBI" id="CHEBI:32364"/>
    </ligand>
</feature>
<feature type="binding site" evidence="1">
    <location>
        <position position="83"/>
    </location>
    <ligand>
        <name>3-dehydroquinate</name>
        <dbReference type="ChEBI" id="CHEBI:32364"/>
    </ligand>
</feature>
<feature type="binding site" evidence="1">
    <location>
        <position position="214"/>
    </location>
    <ligand>
        <name>3-dehydroquinate</name>
        <dbReference type="ChEBI" id="CHEBI:32364"/>
    </ligand>
</feature>
<feature type="binding site" evidence="1">
    <location>
        <position position="233"/>
    </location>
    <ligand>
        <name>3-dehydroquinate</name>
        <dbReference type="ChEBI" id="CHEBI:32364"/>
    </ligand>
</feature>
<feature type="binding site" evidence="1">
    <location>
        <position position="237"/>
    </location>
    <ligand>
        <name>3-dehydroquinate</name>
        <dbReference type="ChEBI" id="CHEBI:32364"/>
    </ligand>
</feature>
<protein>
    <recommendedName>
        <fullName evidence="1">3-dehydroquinate dehydratase</fullName>
        <shortName evidence="1">3-dehydroquinase</shortName>
        <ecNumber evidence="1">4.2.1.10</ecNumber>
    </recommendedName>
    <alternativeName>
        <fullName evidence="1">Type I DHQase</fullName>
    </alternativeName>
    <alternativeName>
        <fullName evidence="1">Type I dehydroquinase</fullName>
        <shortName evidence="1">DHQ1</shortName>
    </alternativeName>
</protein>
<name>AROD_ALKOO</name>
<evidence type="ECO:0000255" key="1">
    <source>
        <dbReference type="HAMAP-Rule" id="MF_00214"/>
    </source>
</evidence>
<sequence length="255" mass="28828">MKKVVKVKDITIGEGMPKICIPILGETLEEIKEEAELLSTFDFDIVEWRADFFQFVEDMDCIKLAMEIIEENLGDKPMIFTLRSLKEGGKREVCEALYFEINRRVLETKNLDILDIELFHDKDEIESLINLAHKNGAKVIISNHDFQQTPSKDEILSRMNRAAQLGADIVKIAVMANDTEDVITVLDATRILKEDYLKIPLIAIAMGKKGMITRFAGEIFGSDITFATAKKTSAPGQLSVEDVKNIVQFIHKHTI</sequence>
<comment type="function">
    <text evidence="1">Involved in the third step of the chorismate pathway, which leads to the biosynthesis of aromatic amino acids. Catalyzes the cis-dehydration of 3-dehydroquinate (DHQ) and introduces the first double bond of the aromatic ring to yield 3-dehydroshikimate.</text>
</comment>
<comment type="catalytic activity">
    <reaction evidence="1">
        <text>3-dehydroquinate = 3-dehydroshikimate + H2O</text>
        <dbReference type="Rhea" id="RHEA:21096"/>
        <dbReference type="ChEBI" id="CHEBI:15377"/>
        <dbReference type="ChEBI" id="CHEBI:16630"/>
        <dbReference type="ChEBI" id="CHEBI:32364"/>
        <dbReference type="EC" id="4.2.1.10"/>
    </reaction>
</comment>
<comment type="pathway">
    <text evidence="1">Metabolic intermediate biosynthesis; chorismate biosynthesis; chorismate from D-erythrose 4-phosphate and phosphoenolpyruvate: step 3/7.</text>
</comment>
<comment type="subunit">
    <text evidence="1">Homodimer.</text>
</comment>
<comment type="similarity">
    <text evidence="1">Belongs to the type-I 3-dehydroquinase family.</text>
</comment>
<organism>
    <name type="scientific">Alkaliphilus oremlandii (strain OhILAs)</name>
    <name type="common">Clostridium oremlandii (strain OhILAs)</name>
    <dbReference type="NCBI Taxonomy" id="350688"/>
    <lineage>
        <taxon>Bacteria</taxon>
        <taxon>Bacillati</taxon>
        <taxon>Bacillota</taxon>
        <taxon>Clostridia</taxon>
        <taxon>Peptostreptococcales</taxon>
        <taxon>Natronincolaceae</taxon>
        <taxon>Alkaliphilus</taxon>
    </lineage>
</organism>
<reference key="1">
    <citation type="submission" date="2007-10" db="EMBL/GenBank/DDBJ databases">
        <title>Complete genome of Alkaliphilus oremlandii OhILAs.</title>
        <authorList>
            <person name="Copeland A."/>
            <person name="Lucas S."/>
            <person name="Lapidus A."/>
            <person name="Barry K."/>
            <person name="Detter J.C."/>
            <person name="Glavina del Rio T."/>
            <person name="Hammon N."/>
            <person name="Israni S."/>
            <person name="Dalin E."/>
            <person name="Tice H."/>
            <person name="Pitluck S."/>
            <person name="Chain P."/>
            <person name="Malfatti S."/>
            <person name="Shin M."/>
            <person name="Vergez L."/>
            <person name="Schmutz J."/>
            <person name="Larimer F."/>
            <person name="Land M."/>
            <person name="Hauser L."/>
            <person name="Kyrpides N."/>
            <person name="Mikhailova N."/>
            <person name="Stolz J.F."/>
            <person name="Dawson A."/>
            <person name="Fisher E."/>
            <person name="Crable B."/>
            <person name="Perera E."/>
            <person name="Lisak J."/>
            <person name="Ranganathan M."/>
            <person name="Basu P."/>
            <person name="Richardson P."/>
        </authorList>
    </citation>
    <scope>NUCLEOTIDE SEQUENCE [LARGE SCALE GENOMIC DNA]</scope>
    <source>
        <strain>OhILAs</strain>
    </source>
</reference>
<proteinExistence type="inferred from homology"/>
<accession>A8MJ87</accession>
<keyword id="KW-0028">Amino-acid biosynthesis</keyword>
<keyword id="KW-0057">Aromatic amino acid biosynthesis</keyword>
<keyword id="KW-0456">Lyase</keyword>
<keyword id="KW-1185">Reference proteome</keyword>
<keyword id="KW-0704">Schiff base</keyword>
<gene>
    <name evidence="1" type="primary">aroD</name>
    <name type="ordered locus">Clos_2337</name>
</gene>
<dbReference type="EC" id="4.2.1.10" evidence="1"/>
<dbReference type="EMBL" id="CP000853">
    <property type="protein sequence ID" value="ABW19869.1"/>
    <property type="molecule type" value="Genomic_DNA"/>
</dbReference>
<dbReference type="RefSeq" id="WP_012160176.1">
    <property type="nucleotide sequence ID" value="NC_009922.1"/>
</dbReference>
<dbReference type="SMR" id="A8MJ87"/>
<dbReference type="STRING" id="350688.Clos_2337"/>
<dbReference type="KEGG" id="aoe:Clos_2337"/>
<dbReference type="eggNOG" id="COG0710">
    <property type="taxonomic scope" value="Bacteria"/>
</dbReference>
<dbReference type="HOGENOM" id="CLU_064444_0_0_9"/>
<dbReference type="OrthoDB" id="9813659at2"/>
<dbReference type="UniPathway" id="UPA00053">
    <property type="reaction ID" value="UER00086"/>
</dbReference>
<dbReference type="Proteomes" id="UP000000269">
    <property type="component" value="Chromosome"/>
</dbReference>
<dbReference type="GO" id="GO:0003855">
    <property type="term" value="F:3-dehydroquinate dehydratase activity"/>
    <property type="evidence" value="ECO:0007669"/>
    <property type="project" value="UniProtKB-UniRule"/>
</dbReference>
<dbReference type="GO" id="GO:0046279">
    <property type="term" value="P:3,4-dihydroxybenzoate biosynthetic process"/>
    <property type="evidence" value="ECO:0007669"/>
    <property type="project" value="TreeGrafter"/>
</dbReference>
<dbReference type="GO" id="GO:0008652">
    <property type="term" value="P:amino acid biosynthetic process"/>
    <property type="evidence" value="ECO:0007669"/>
    <property type="project" value="UniProtKB-KW"/>
</dbReference>
<dbReference type="GO" id="GO:0009073">
    <property type="term" value="P:aromatic amino acid family biosynthetic process"/>
    <property type="evidence" value="ECO:0007669"/>
    <property type="project" value="UniProtKB-KW"/>
</dbReference>
<dbReference type="GO" id="GO:0009423">
    <property type="term" value="P:chorismate biosynthetic process"/>
    <property type="evidence" value="ECO:0007669"/>
    <property type="project" value="UniProtKB-UniRule"/>
</dbReference>
<dbReference type="CDD" id="cd00502">
    <property type="entry name" value="DHQase_I"/>
    <property type="match status" value="1"/>
</dbReference>
<dbReference type="FunFam" id="3.20.20.70:FF:000047">
    <property type="entry name" value="3-dehydroquinate dehydratase"/>
    <property type="match status" value="1"/>
</dbReference>
<dbReference type="Gene3D" id="3.20.20.70">
    <property type="entry name" value="Aldolase class I"/>
    <property type="match status" value="1"/>
</dbReference>
<dbReference type="HAMAP" id="MF_00214">
    <property type="entry name" value="AroD"/>
    <property type="match status" value="1"/>
</dbReference>
<dbReference type="InterPro" id="IPR018508">
    <property type="entry name" value="3-dehydroquinate_DH_AS"/>
</dbReference>
<dbReference type="InterPro" id="IPR013785">
    <property type="entry name" value="Aldolase_TIM"/>
</dbReference>
<dbReference type="InterPro" id="IPR001381">
    <property type="entry name" value="DHquinase_I"/>
</dbReference>
<dbReference type="InterPro" id="IPR050146">
    <property type="entry name" value="Type-I_3-dehydroquinase"/>
</dbReference>
<dbReference type="NCBIfam" id="TIGR01093">
    <property type="entry name" value="aroD"/>
    <property type="match status" value="1"/>
</dbReference>
<dbReference type="PANTHER" id="PTHR43699">
    <property type="entry name" value="3-DEHYDROQUINATE DEHYDRATASE"/>
    <property type="match status" value="1"/>
</dbReference>
<dbReference type="PANTHER" id="PTHR43699:SF1">
    <property type="entry name" value="3-DEHYDROQUINATE DEHYDRATASE"/>
    <property type="match status" value="1"/>
</dbReference>
<dbReference type="Pfam" id="PF01487">
    <property type="entry name" value="DHquinase_I"/>
    <property type="match status" value="1"/>
</dbReference>
<dbReference type="SUPFAM" id="SSF51569">
    <property type="entry name" value="Aldolase"/>
    <property type="match status" value="1"/>
</dbReference>
<dbReference type="PROSITE" id="PS01028">
    <property type="entry name" value="DEHYDROQUINASE_I"/>
    <property type="match status" value="1"/>
</dbReference>